<evidence type="ECO:0000305" key="1"/>
<gene>
    <name type="ordered locus">MJ0582</name>
</gene>
<dbReference type="EMBL" id="L77117">
    <property type="protein sequence ID" value="AAB98576.1"/>
    <property type="molecule type" value="Genomic_DNA"/>
</dbReference>
<dbReference type="PIR" id="F64372">
    <property type="entry name" value="F64372"/>
</dbReference>
<dbReference type="RefSeq" id="WP_010870086.1">
    <property type="nucleotide sequence ID" value="NC_000909.1"/>
</dbReference>
<dbReference type="STRING" id="243232.MJ_0582"/>
<dbReference type="PaxDb" id="243232-MJ_0582"/>
<dbReference type="DNASU" id="1451447"/>
<dbReference type="EnsemblBacteria" id="AAB98576">
    <property type="protein sequence ID" value="AAB98576"/>
    <property type="gene ID" value="MJ_0582"/>
</dbReference>
<dbReference type="GeneID" id="1451447"/>
<dbReference type="KEGG" id="mja:MJ_0582"/>
<dbReference type="eggNOG" id="arCOG02639">
    <property type="taxonomic scope" value="Archaea"/>
</dbReference>
<dbReference type="HOGENOM" id="CLU_147304_3_0_2"/>
<dbReference type="InParanoid" id="Q58002"/>
<dbReference type="OrthoDB" id="63175at2157"/>
<dbReference type="PhylomeDB" id="Q58002"/>
<dbReference type="Proteomes" id="UP000000805">
    <property type="component" value="Chromosome"/>
</dbReference>
<dbReference type="InterPro" id="IPR014925">
    <property type="entry name" value="CGGC_dom"/>
</dbReference>
<dbReference type="Pfam" id="PF08821">
    <property type="entry name" value="CGGC"/>
    <property type="match status" value="1"/>
</dbReference>
<dbReference type="SMART" id="SM01078">
    <property type="entry name" value="CGGC"/>
    <property type="match status" value="1"/>
</dbReference>
<sequence length="128" mass="14086">MKVAIIACQKMVEMGCPGKEACVSCFKAINEKSGAFERYKDVELVAFTTCGGCPGRRFPMRVKLLKTAAGAEAIHIANCTFLQPECPYINFDEICKKLMEELEIPIVFGTHTLVKKGEVVCTCGDNKE</sequence>
<comment type="similarity">
    <text evidence="1">To M.jannaschii MJ0766.</text>
</comment>
<reference key="1">
    <citation type="journal article" date="1996" name="Science">
        <title>Complete genome sequence of the methanogenic archaeon, Methanococcus jannaschii.</title>
        <authorList>
            <person name="Bult C.J."/>
            <person name="White O."/>
            <person name="Olsen G.J."/>
            <person name="Zhou L."/>
            <person name="Fleischmann R.D."/>
            <person name="Sutton G.G."/>
            <person name="Blake J.A."/>
            <person name="FitzGerald L.M."/>
            <person name="Clayton R.A."/>
            <person name="Gocayne J.D."/>
            <person name="Kerlavage A.R."/>
            <person name="Dougherty B.A."/>
            <person name="Tomb J.-F."/>
            <person name="Adams M.D."/>
            <person name="Reich C.I."/>
            <person name="Overbeek R."/>
            <person name="Kirkness E.F."/>
            <person name="Weinstock K.G."/>
            <person name="Merrick J.M."/>
            <person name="Glodek A."/>
            <person name="Scott J.L."/>
            <person name="Geoghagen N.S.M."/>
            <person name="Weidman J.F."/>
            <person name="Fuhrmann J.L."/>
            <person name="Nguyen D."/>
            <person name="Utterback T.R."/>
            <person name="Kelley J.M."/>
            <person name="Peterson J.D."/>
            <person name="Sadow P.W."/>
            <person name="Hanna M.C."/>
            <person name="Cotton M.D."/>
            <person name="Roberts K.M."/>
            <person name="Hurst M.A."/>
            <person name="Kaine B.P."/>
            <person name="Borodovsky M."/>
            <person name="Klenk H.-P."/>
            <person name="Fraser C.M."/>
            <person name="Smith H.O."/>
            <person name="Woese C.R."/>
            <person name="Venter J.C."/>
        </authorList>
    </citation>
    <scope>NUCLEOTIDE SEQUENCE [LARGE SCALE GENOMIC DNA]</scope>
    <source>
        <strain>ATCC 43067 / DSM 2661 / JAL-1 / JCM 10045 / NBRC 100440</strain>
    </source>
</reference>
<proteinExistence type="predicted"/>
<accession>Q58002</accession>
<organism>
    <name type="scientific">Methanocaldococcus jannaschii (strain ATCC 43067 / DSM 2661 / JAL-1 / JCM 10045 / NBRC 100440)</name>
    <name type="common">Methanococcus jannaschii</name>
    <dbReference type="NCBI Taxonomy" id="243232"/>
    <lineage>
        <taxon>Archaea</taxon>
        <taxon>Methanobacteriati</taxon>
        <taxon>Methanobacteriota</taxon>
        <taxon>Methanomada group</taxon>
        <taxon>Methanococci</taxon>
        <taxon>Methanococcales</taxon>
        <taxon>Methanocaldococcaceae</taxon>
        <taxon>Methanocaldococcus</taxon>
    </lineage>
</organism>
<keyword id="KW-1185">Reference proteome</keyword>
<name>Y582_METJA</name>
<protein>
    <recommendedName>
        <fullName>Uncharacterized protein MJ0582</fullName>
    </recommendedName>
</protein>
<feature type="chain" id="PRO_0000106942" description="Uncharacterized protein MJ0582">
    <location>
        <begin position="1"/>
        <end position="128"/>
    </location>
</feature>